<evidence type="ECO:0000255" key="1">
    <source>
        <dbReference type="HAMAP-Rule" id="MF_01341"/>
    </source>
</evidence>
<evidence type="ECO:0000256" key="2">
    <source>
        <dbReference type="SAM" id="MobiDB-lite"/>
    </source>
</evidence>
<evidence type="ECO:0000305" key="3"/>
<organism>
    <name type="scientific">Yersinia enterocolitica serotype O:8 / biotype 1B (strain NCTC 13174 / 8081)</name>
    <dbReference type="NCBI Taxonomy" id="393305"/>
    <lineage>
        <taxon>Bacteria</taxon>
        <taxon>Pseudomonadati</taxon>
        <taxon>Pseudomonadota</taxon>
        <taxon>Gammaproteobacteria</taxon>
        <taxon>Enterobacterales</taxon>
        <taxon>Yersiniaceae</taxon>
        <taxon>Yersinia</taxon>
    </lineage>
</organism>
<proteinExistence type="inferred from homology"/>
<feature type="chain" id="PRO_1000054563" description="Large ribosomal subunit protein uL15">
    <location>
        <begin position="1"/>
        <end position="144"/>
    </location>
</feature>
<feature type="region of interest" description="Disordered" evidence="2">
    <location>
        <begin position="1"/>
        <end position="52"/>
    </location>
</feature>
<feature type="compositionally biased region" description="Gly residues" evidence="2">
    <location>
        <begin position="21"/>
        <end position="31"/>
    </location>
</feature>
<reference key="1">
    <citation type="journal article" date="2006" name="PLoS Genet.">
        <title>The complete genome sequence and comparative genome analysis of the high pathogenicity Yersinia enterocolitica strain 8081.</title>
        <authorList>
            <person name="Thomson N.R."/>
            <person name="Howard S."/>
            <person name="Wren B.W."/>
            <person name="Holden M.T.G."/>
            <person name="Crossman L."/>
            <person name="Challis G.L."/>
            <person name="Churcher C."/>
            <person name="Mungall K."/>
            <person name="Brooks K."/>
            <person name="Chillingworth T."/>
            <person name="Feltwell T."/>
            <person name="Abdellah Z."/>
            <person name="Hauser H."/>
            <person name="Jagels K."/>
            <person name="Maddison M."/>
            <person name="Moule S."/>
            <person name="Sanders M."/>
            <person name="Whitehead S."/>
            <person name="Quail M.A."/>
            <person name="Dougan G."/>
            <person name="Parkhill J."/>
            <person name="Prentice M.B."/>
        </authorList>
    </citation>
    <scope>NUCLEOTIDE SEQUENCE [LARGE SCALE GENOMIC DNA]</scope>
    <source>
        <strain>NCTC 13174 / 8081</strain>
    </source>
</reference>
<sequence length="144" mass="15168">MRLNTLSPAEGAKHAPKRVGRGIGSGLGKTAGRGHKGQNSRSGGGVRRGFEGGQMPLYRRLPKFGFTSRKAMITAEVRLSELALVEGDVIDLNTLKAANVVGTQIEFAKVMLSGEITRAVTLRGLRVTKGARAAIEAAGGKIEE</sequence>
<keyword id="KW-0687">Ribonucleoprotein</keyword>
<keyword id="KW-0689">Ribosomal protein</keyword>
<keyword id="KW-0694">RNA-binding</keyword>
<keyword id="KW-0699">rRNA-binding</keyword>
<name>RL15_YERE8</name>
<comment type="function">
    <text evidence="1">Binds to the 23S rRNA.</text>
</comment>
<comment type="subunit">
    <text evidence="1">Part of the 50S ribosomal subunit.</text>
</comment>
<comment type="similarity">
    <text evidence="1">Belongs to the universal ribosomal protein uL15 family.</text>
</comment>
<accession>A1JS08</accession>
<protein>
    <recommendedName>
        <fullName evidence="1">Large ribosomal subunit protein uL15</fullName>
    </recommendedName>
    <alternativeName>
        <fullName evidence="3">50S ribosomal protein L15</fullName>
    </alternativeName>
</protein>
<dbReference type="EMBL" id="AM286415">
    <property type="protein sequence ID" value="CAL13923.1"/>
    <property type="molecule type" value="Genomic_DNA"/>
</dbReference>
<dbReference type="RefSeq" id="WP_004391411.1">
    <property type="nucleotide sequence ID" value="NC_008800.1"/>
</dbReference>
<dbReference type="RefSeq" id="YP_001008049.1">
    <property type="nucleotide sequence ID" value="NC_008800.1"/>
</dbReference>
<dbReference type="SMR" id="A1JS08"/>
<dbReference type="GeneID" id="97454250"/>
<dbReference type="KEGG" id="yen:YE3904"/>
<dbReference type="PATRIC" id="fig|393305.7.peg.4154"/>
<dbReference type="eggNOG" id="COG0200">
    <property type="taxonomic scope" value="Bacteria"/>
</dbReference>
<dbReference type="HOGENOM" id="CLU_055188_4_2_6"/>
<dbReference type="OrthoDB" id="9810293at2"/>
<dbReference type="Proteomes" id="UP000000642">
    <property type="component" value="Chromosome"/>
</dbReference>
<dbReference type="GO" id="GO:0022625">
    <property type="term" value="C:cytosolic large ribosomal subunit"/>
    <property type="evidence" value="ECO:0007669"/>
    <property type="project" value="TreeGrafter"/>
</dbReference>
<dbReference type="GO" id="GO:0019843">
    <property type="term" value="F:rRNA binding"/>
    <property type="evidence" value="ECO:0007669"/>
    <property type="project" value="UniProtKB-UniRule"/>
</dbReference>
<dbReference type="GO" id="GO:0003735">
    <property type="term" value="F:structural constituent of ribosome"/>
    <property type="evidence" value="ECO:0007669"/>
    <property type="project" value="InterPro"/>
</dbReference>
<dbReference type="GO" id="GO:0006412">
    <property type="term" value="P:translation"/>
    <property type="evidence" value="ECO:0007669"/>
    <property type="project" value="UniProtKB-UniRule"/>
</dbReference>
<dbReference type="FunFam" id="3.100.10.10:FF:000003">
    <property type="entry name" value="50S ribosomal protein L15"/>
    <property type="match status" value="1"/>
</dbReference>
<dbReference type="Gene3D" id="3.100.10.10">
    <property type="match status" value="1"/>
</dbReference>
<dbReference type="HAMAP" id="MF_01341">
    <property type="entry name" value="Ribosomal_uL15"/>
    <property type="match status" value="1"/>
</dbReference>
<dbReference type="InterPro" id="IPR030878">
    <property type="entry name" value="Ribosomal_uL15"/>
</dbReference>
<dbReference type="InterPro" id="IPR021131">
    <property type="entry name" value="Ribosomal_uL15/eL18"/>
</dbReference>
<dbReference type="InterPro" id="IPR036227">
    <property type="entry name" value="Ribosomal_uL15/eL18_sf"/>
</dbReference>
<dbReference type="InterPro" id="IPR005749">
    <property type="entry name" value="Ribosomal_uL15_bac-type"/>
</dbReference>
<dbReference type="InterPro" id="IPR001196">
    <property type="entry name" value="Ribosomal_uL15_CS"/>
</dbReference>
<dbReference type="NCBIfam" id="TIGR01071">
    <property type="entry name" value="rplO_bact"/>
    <property type="match status" value="1"/>
</dbReference>
<dbReference type="PANTHER" id="PTHR12934">
    <property type="entry name" value="50S RIBOSOMAL PROTEIN L15"/>
    <property type="match status" value="1"/>
</dbReference>
<dbReference type="PANTHER" id="PTHR12934:SF11">
    <property type="entry name" value="LARGE RIBOSOMAL SUBUNIT PROTEIN UL15M"/>
    <property type="match status" value="1"/>
</dbReference>
<dbReference type="Pfam" id="PF00828">
    <property type="entry name" value="Ribosomal_L27A"/>
    <property type="match status" value="1"/>
</dbReference>
<dbReference type="SUPFAM" id="SSF52080">
    <property type="entry name" value="Ribosomal proteins L15p and L18e"/>
    <property type="match status" value="1"/>
</dbReference>
<dbReference type="PROSITE" id="PS00475">
    <property type="entry name" value="RIBOSOMAL_L15"/>
    <property type="match status" value="1"/>
</dbReference>
<gene>
    <name evidence="1" type="primary">rplO</name>
    <name type="ordered locus">YE3904</name>
</gene>